<gene>
    <name type="primary">YCK2</name>
    <name type="synonym">CKI1</name>
    <name type="ordered locus">YNL154C</name>
    <name type="ORF">N1755</name>
</gene>
<keyword id="KW-0007">Acetylation</keyword>
<keyword id="KW-0067">ATP-binding</keyword>
<keyword id="KW-1003">Cell membrane</keyword>
<keyword id="KW-1017">Isopeptide bond</keyword>
<keyword id="KW-0418">Kinase</keyword>
<keyword id="KW-0449">Lipoprotein</keyword>
<keyword id="KW-0472">Membrane</keyword>
<keyword id="KW-0547">Nucleotide-binding</keyword>
<keyword id="KW-0564">Palmitate</keyword>
<keyword id="KW-0597">Phosphoprotein</keyword>
<keyword id="KW-1185">Reference proteome</keyword>
<keyword id="KW-0723">Serine/threonine-protein kinase</keyword>
<keyword id="KW-0808">Transferase</keyword>
<keyword id="KW-0832">Ubl conjugation</keyword>
<reference key="1">
    <citation type="journal article" date="1992" name="Proc. Natl. Acad. Sci. U.S.A.">
        <title>Yeast casein kinase I homologues: an essential gene pair.</title>
        <authorList>
            <person name="Robinson L.C."/>
            <person name="Hubbard E.J.A."/>
            <person name="Graves P.R."/>
            <person name="dePaoli-Roach A.A."/>
            <person name="Roach P.J."/>
            <person name="Kung C."/>
            <person name="Haas D.W."/>
            <person name="Hagedorn C.H."/>
            <person name="Goebl M."/>
            <person name="Culbertson M.R."/>
            <person name="Carlson M."/>
        </authorList>
    </citation>
    <scope>NUCLEOTIDE SEQUENCE [GENOMIC DNA]</scope>
    <source>
        <strain>ATCC 204508 / S288c</strain>
    </source>
</reference>
<reference key="2">
    <citation type="journal article" date="1992" name="Mol. Biol. Cell">
        <title>Two genes in Saccharomyces cerevisiae encode a membrane-bound form of casein kinase-1.</title>
        <authorList>
            <person name="Wang P.-C."/>
            <person name="Vancura A."/>
            <person name="Mitcheson T.G.M."/>
            <person name="Kuret J."/>
        </authorList>
    </citation>
    <scope>NUCLEOTIDE SEQUENCE [MRNA]</scope>
</reference>
<reference key="3">
    <citation type="journal article" date="1996" name="Yeast">
        <title>The sequence of 36.8 kb from the left arm of chromosome XIV reveals 24 complete open reading frames: 18 correspond to new genes, one of which encodes a protein similar to the human myotonic dystrophy kinase.</title>
        <authorList>
            <person name="Nasr F."/>
            <person name="Becam A.-M."/>
            <person name="Herbert C.J."/>
        </authorList>
    </citation>
    <scope>NUCLEOTIDE SEQUENCE [GENOMIC DNA]</scope>
    <source>
        <strain>ATCC 96604 / S288c / FY1679</strain>
    </source>
</reference>
<reference key="4">
    <citation type="journal article" date="1997" name="Nature">
        <title>The nucleotide sequence of Saccharomyces cerevisiae chromosome XIV and its evolutionary implications.</title>
        <authorList>
            <person name="Philippsen P."/>
            <person name="Kleine K."/>
            <person name="Poehlmann R."/>
            <person name="Duesterhoeft A."/>
            <person name="Hamberg K."/>
            <person name="Hegemann J.H."/>
            <person name="Obermaier B."/>
            <person name="Urrestarazu L.A."/>
            <person name="Aert R."/>
            <person name="Albermann K."/>
            <person name="Altmann R."/>
            <person name="Andre B."/>
            <person name="Baladron V."/>
            <person name="Ballesta J.P.G."/>
            <person name="Becam A.-M."/>
            <person name="Beinhauer J.D."/>
            <person name="Boskovic J."/>
            <person name="Buitrago M.J."/>
            <person name="Bussereau F."/>
            <person name="Coster F."/>
            <person name="Crouzet M."/>
            <person name="D'Angelo M."/>
            <person name="Dal Pero F."/>
            <person name="De Antoni A."/>
            <person name="del Rey F."/>
            <person name="Doignon F."/>
            <person name="Domdey H."/>
            <person name="Dubois E."/>
            <person name="Fiedler T.A."/>
            <person name="Fleig U."/>
            <person name="Floeth M."/>
            <person name="Fritz C."/>
            <person name="Gaillardin C."/>
            <person name="Garcia-Cantalejo J.M."/>
            <person name="Glansdorff N."/>
            <person name="Goffeau A."/>
            <person name="Gueldener U."/>
            <person name="Herbert C.J."/>
            <person name="Heumann K."/>
            <person name="Heuss-Neitzel D."/>
            <person name="Hilbert H."/>
            <person name="Hinni K."/>
            <person name="Iraqui Houssaini I."/>
            <person name="Jacquet M."/>
            <person name="Jimenez A."/>
            <person name="Jonniaux J.-L."/>
            <person name="Karpfinger-Hartl L."/>
            <person name="Lanfranchi G."/>
            <person name="Lepingle A."/>
            <person name="Levesque H."/>
            <person name="Lyck R."/>
            <person name="Maftahi M."/>
            <person name="Mallet L."/>
            <person name="Maurer C.T.C."/>
            <person name="Messenguy F."/>
            <person name="Mewes H.-W."/>
            <person name="Moestl D."/>
            <person name="Nasr F."/>
            <person name="Nicaud J.-M."/>
            <person name="Niedenthal R.K."/>
            <person name="Pandolfo D."/>
            <person name="Pierard A."/>
            <person name="Piravandi E."/>
            <person name="Planta R.J."/>
            <person name="Pohl T.M."/>
            <person name="Purnelle B."/>
            <person name="Rebischung C."/>
            <person name="Remacha M.A."/>
            <person name="Revuelta J.L."/>
            <person name="Rinke M."/>
            <person name="Saiz J.E."/>
            <person name="Sartorello F."/>
            <person name="Scherens B."/>
            <person name="Sen-Gupta M."/>
            <person name="Soler-Mira A."/>
            <person name="Urbanus J.H.M."/>
            <person name="Valle G."/>
            <person name="Van Dyck L."/>
            <person name="Verhasselt P."/>
            <person name="Vierendeels F."/>
            <person name="Vissers S."/>
            <person name="Voet M."/>
            <person name="Volckaert G."/>
            <person name="Wach A."/>
            <person name="Wambutt R."/>
            <person name="Wedler H."/>
            <person name="Zollner A."/>
            <person name="Hani J."/>
        </authorList>
    </citation>
    <scope>NUCLEOTIDE SEQUENCE [LARGE SCALE GENOMIC DNA]</scope>
    <source>
        <strain>ATCC 204508 / S288c</strain>
    </source>
</reference>
<reference key="5">
    <citation type="journal article" date="2014" name="G3 (Bethesda)">
        <title>The reference genome sequence of Saccharomyces cerevisiae: Then and now.</title>
        <authorList>
            <person name="Engel S.R."/>
            <person name="Dietrich F.S."/>
            <person name="Fisk D.G."/>
            <person name="Binkley G."/>
            <person name="Balakrishnan R."/>
            <person name="Costanzo M.C."/>
            <person name="Dwight S.S."/>
            <person name="Hitz B.C."/>
            <person name="Karra K."/>
            <person name="Nash R.S."/>
            <person name="Weng S."/>
            <person name="Wong E.D."/>
            <person name="Lloyd P."/>
            <person name="Skrzypek M.S."/>
            <person name="Miyasato S.R."/>
            <person name="Simison M."/>
            <person name="Cherry J.M."/>
        </authorList>
    </citation>
    <scope>GENOME REANNOTATION</scope>
    <source>
        <strain>ATCC 204508 / S288c</strain>
    </source>
</reference>
<reference key="6">
    <citation type="journal article" date="2000" name="Mol. Cell. Biol.">
        <title>Akr1p and the type I casein kinases act prior to the ubiquitination step of yeast endocytosis: Akr1p is required for kinase localization to the plasma membrane.</title>
        <authorList>
            <person name="Feng Y."/>
            <person name="Davis N.G."/>
        </authorList>
    </citation>
    <scope>FUNCTION</scope>
    <scope>SUBCELLULAR LOCATION</scope>
</reference>
<reference key="7">
    <citation type="journal article" date="2002" name="J. Cell Biol.">
        <title>The yeast DHHC cysteine-rich domain protein Akr1p is a palmitoyl transferase.</title>
        <authorList>
            <person name="Roth A.F."/>
            <person name="Feng Y."/>
            <person name="Chen L."/>
            <person name="Davis N.G."/>
        </authorList>
    </citation>
    <scope>PALMITOYLATION AT CYS-545 AND CYS-546</scope>
</reference>
<reference key="8">
    <citation type="journal article" date="2003" name="Nature">
        <title>Global analysis of protein expression in yeast.</title>
        <authorList>
            <person name="Ghaemmaghami S."/>
            <person name="Huh W.-K."/>
            <person name="Bower K."/>
            <person name="Howson R.W."/>
            <person name="Belle A."/>
            <person name="Dephoure N."/>
            <person name="O'Shea E.K."/>
            <person name="Weissman J.S."/>
        </authorList>
    </citation>
    <scope>LEVEL OF PROTEIN EXPRESSION [LARGE SCALE ANALYSIS]</scope>
</reference>
<reference key="9">
    <citation type="journal article" date="2004" name="J. Biol. Chem.">
        <title>Akr1p-dependent palmitoylation of Yck2p yeast casein kinase 1 is necessary and sufficient for plasma membrane targeting.</title>
        <authorList>
            <person name="Babu P."/>
            <person name="Deschenes R.J."/>
            <person name="Robinson L.C."/>
        </authorList>
    </citation>
    <scope>PALMITOYLATION AT CYS-545 AND CYS-546</scope>
    <scope>MUTAGENESIS OF CYS-545 AND CYS-546</scope>
</reference>
<reference key="10">
    <citation type="journal article" date="2007" name="J. Proteome Res.">
        <title>Large-scale phosphorylation analysis of alpha-factor-arrested Saccharomyces cerevisiae.</title>
        <authorList>
            <person name="Li X."/>
            <person name="Gerber S.A."/>
            <person name="Rudner A.D."/>
            <person name="Beausoleil S.A."/>
            <person name="Haas W."/>
            <person name="Villen J."/>
            <person name="Elias J.E."/>
            <person name="Gygi S.P."/>
        </authorList>
    </citation>
    <scope>PHOSPHORYLATION [LARGE SCALE ANALYSIS] AT SER-455</scope>
    <scope>IDENTIFICATION BY MASS SPECTROMETRY [LARGE SCALE ANALYSIS]</scope>
    <source>
        <strain>ADR376</strain>
    </source>
</reference>
<reference key="11">
    <citation type="journal article" date="2008" name="Mol. Cell. Proteomics">
        <title>A multidimensional chromatography technology for in-depth phosphoproteome analysis.</title>
        <authorList>
            <person name="Albuquerque C.P."/>
            <person name="Smolka M.B."/>
            <person name="Payne S.H."/>
            <person name="Bafna V."/>
            <person name="Eng J."/>
            <person name="Zhou H."/>
        </authorList>
    </citation>
    <scope>IDENTIFICATION BY MASS SPECTROMETRY [LARGE SCALE ANALYSIS]</scope>
</reference>
<reference key="12">
    <citation type="journal article" date="2009" name="Science">
        <title>Global analysis of Cdk1 substrate phosphorylation sites provides insights into evolution.</title>
        <authorList>
            <person name="Holt L.J."/>
            <person name="Tuch B.B."/>
            <person name="Villen J."/>
            <person name="Johnson A.D."/>
            <person name="Gygi S.P."/>
            <person name="Morgan D.O."/>
        </authorList>
    </citation>
    <scope>PHOSPHORYLATION [LARGE SCALE ANALYSIS] AT SER-455</scope>
    <scope>IDENTIFICATION BY MASS SPECTROMETRY [LARGE SCALE ANALYSIS]</scope>
</reference>
<reference key="13">
    <citation type="journal article" date="2012" name="Proc. Natl. Acad. Sci. U.S.A.">
        <title>N-terminal acetylome analyses and functional insights of the N-terminal acetyltransferase NatB.</title>
        <authorList>
            <person name="Van Damme P."/>
            <person name="Lasa M."/>
            <person name="Polevoda B."/>
            <person name="Gazquez C."/>
            <person name="Elosegui-Artola A."/>
            <person name="Kim D.S."/>
            <person name="De Juan-Pardo E."/>
            <person name="Demeyer K."/>
            <person name="Hole K."/>
            <person name="Larrea E."/>
            <person name="Timmerman E."/>
            <person name="Prieto J."/>
            <person name="Arnesen T."/>
            <person name="Sherman F."/>
            <person name="Gevaert K."/>
            <person name="Aldabe R."/>
        </authorList>
    </citation>
    <scope>ACETYLATION [LARGE SCALE ANALYSIS] AT SER-2</scope>
    <scope>CLEAVAGE OF INITIATOR METHIONINE [LARGE SCALE ANALYSIS]</scope>
    <scope>IDENTIFICATION BY MASS SPECTROMETRY [LARGE SCALE ANALYSIS]</scope>
</reference>
<reference key="14">
    <citation type="journal article" date="2012" name="Proteomics">
        <title>Sites of ubiquitin attachment in Saccharomyces cerevisiae.</title>
        <authorList>
            <person name="Starita L.M."/>
            <person name="Lo R.S."/>
            <person name="Eng J.K."/>
            <person name="von Haller P.D."/>
            <person name="Fields S."/>
        </authorList>
    </citation>
    <scope>UBIQUITINATION [LARGE SCALE ANALYSIS] AT LYS-465</scope>
    <scope>IDENTIFICATION BY MASS SPECTROMETRY [LARGE SCALE ANALYSIS]</scope>
</reference>
<dbReference type="EC" id="2.7.11.1"/>
<dbReference type="EMBL" id="M74453">
    <property type="protein sequence ID" value="AAA35230.1"/>
    <property type="molecule type" value="Genomic_DNA"/>
</dbReference>
<dbReference type="EMBL" id="X60326">
    <property type="protein sequence ID" value="CAA42896.1"/>
    <property type="molecule type" value="mRNA"/>
</dbReference>
<dbReference type="EMBL" id="X92517">
    <property type="protein sequence ID" value="CAA63285.1"/>
    <property type="molecule type" value="Genomic_DNA"/>
</dbReference>
<dbReference type="EMBL" id="Z71430">
    <property type="protein sequence ID" value="CAA96041.1"/>
    <property type="molecule type" value="Genomic_DNA"/>
</dbReference>
<dbReference type="EMBL" id="BK006947">
    <property type="protein sequence ID" value="DAA10395.1"/>
    <property type="molecule type" value="Genomic_DNA"/>
</dbReference>
<dbReference type="PIR" id="S29522">
    <property type="entry name" value="S29522"/>
</dbReference>
<dbReference type="RefSeq" id="NP_014245.1">
    <property type="nucleotide sequence ID" value="NM_001182992.1"/>
</dbReference>
<dbReference type="SMR" id="P23292"/>
<dbReference type="BioGRID" id="35675">
    <property type="interactions" value="499"/>
</dbReference>
<dbReference type="DIP" id="DIP-720N"/>
<dbReference type="FunCoup" id="P23292">
    <property type="interactions" value="775"/>
</dbReference>
<dbReference type="IntAct" id="P23292">
    <property type="interactions" value="13"/>
</dbReference>
<dbReference type="MINT" id="P23292"/>
<dbReference type="STRING" id="4932.YNL154C"/>
<dbReference type="iPTMnet" id="P23292"/>
<dbReference type="SwissPalm" id="P23292"/>
<dbReference type="PaxDb" id="4932-YNL154C"/>
<dbReference type="PeptideAtlas" id="P23292"/>
<dbReference type="EnsemblFungi" id="YNL154C_mRNA">
    <property type="protein sequence ID" value="YNL154C"/>
    <property type="gene ID" value="YNL154C"/>
</dbReference>
<dbReference type="GeneID" id="855568"/>
<dbReference type="KEGG" id="sce:YNL154C"/>
<dbReference type="AGR" id="SGD:S000005098"/>
<dbReference type="SGD" id="S000005098">
    <property type="gene designation" value="YCK2"/>
</dbReference>
<dbReference type="VEuPathDB" id="FungiDB:YNL154C"/>
<dbReference type="eggNOG" id="KOG1165">
    <property type="taxonomic scope" value="Eukaryota"/>
</dbReference>
<dbReference type="GeneTree" id="ENSGT00940000176388"/>
<dbReference type="HOGENOM" id="CLU_019279_1_0_1"/>
<dbReference type="InParanoid" id="P23292"/>
<dbReference type="OMA" id="DWMHLNG"/>
<dbReference type="OrthoDB" id="5800476at2759"/>
<dbReference type="BioCyc" id="YEAST:YNL154C-MONOMER"/>
<dbReference type="BRENDA" id="2.7.11.1">
    <property type="organism ID" value="984"/>
</dbReference>
<dbReference type="BioGRID-ORCS" id="855568">
    <property type="hits" value="1 hit in 13 CRISPR screens"/>
</dbReference>
<dbReference type="PRO" id="PR:P23292"/>
<dbReference type="Proteomes" id="UP000002311">
    <property type="component" value="Chromosome XIV"/>
</dbReference>
<dbReference type="RNAct" id="P23292">
    <property type="molecule type" value="protein"/>
</dbReference>
<dbReference type="GO" id="GO:0071944">
    <property type="term" value="C:cell periphery"/>
    <property type="evidence" value="ECO:0007005"/>
    <property type="project" value="SGD"/>
</dbReference>
<dbReference type="GO" id="GO:0005935">
    <property type="term" value="C:cellular bud neck"/>
    <property type="evidence" value="ECO:0000314"/>
    <property type="project" value="SGD"/>
</dbReference>
<dbReference type="GO" id="GO:0005737">
    <property type="term" value="C:cytoplasm"/>
    <property type="evidence" value="ECO:0000318"/>
    <property type="project" value="GO_Central"/>
</dbReference>
<dbReference type="GO" id="GO:0005937">
    <property type="term" value="C:mating projection"/>
    <property type="evidence" value="ECO:0000314"/>
    <property type="project" value="SGD"/>
</dbReference>
<dbReference type="GO" id="GO:0005634">
    <property type="term" value="C:nucleus"/>
    <property type="evidence" value="ECO:0000318"/>
    <property type="project" value="GO_Central"/>
</dbReference>
<dbReference type="GO" id="GO:0005886">
    <property type="term" value="C:plasma membrane"/>
    <property type="evidence" value="ECO:0000314"/>
    <property type="project" value="SGD"/>
</dbReference>
<dbReference type="GO" id="GO:0005524">
    <property type="term" value="F:ATP binding"/>
    <property type="evidence" value="ECO:0007669"/>
    <property type="project" value="UniProtKB-KW"/>
</dbReference>
<dbReference type="GO" id="GO:0004672">
    <property type="term" value="F:protein kinase activity"/>
    <property type="evidence" value="ECO:0007005"/>
    <property type="project" value="SGD"/>
</dbReference>
<dbReference type="GO" id="GO:0106310">
    <property type="term" value="F:protein serine kinase activity"/>
    <property type="evidence" value="ECO:0007669"/>
    <property type="project" value="RHEA"/>
</dbReference>
<dbReference type="GO" id="GO:0004674">
    <property type="term" value="F:protein serine/threonine kinase activity"/>
    <property type="evidence" value="ECO:0000314"/>
    <property type="project" value="SGD"/>
</dbReference>
<dbReference type="GO" id="GO:0000902">
    <property type="term" value="P:cell morphogenesis"/>
    <property type="evidence" value="ECO:0000316"/>
    <property type="project" value="SGD"/>
</dbReference>
<dbReference type="GO" id="GO:0006897">
    <property type="term" value="P:endocytosis"/>
    <property type="evidence" value="ECO:0000315"/>
    <property type="project" value="SGD"/>
</dbReference>
<dbReference type="GO" id="GO:0010255">
    <property type="term" value="P:glucose mediated signaling pathway"/>
    <property type="evidence" value="ECO:0000316"/>
    <property type="project" value="SGD"/>
</dbReference>
<dbReference type="GO" id="GO:0009749">
    <property type="term" value="P:response to glucose"/>
    <property type="evidence" value="ECO:0000315"/>
    <property type="project" value="SGD"/>
</dbReference>
<dbReference type="GO" id="GO:0007165">
    <property type="term" value="P:signal transduction"/>
    <property type="evidence" value="ECO:0000318"/>
    <property type="project" value="GO_Central"/>
</dbReference>
<dbReference type="CDD" id="cd14127">
    <property type="entry name" value="STKc_CK1_fungal"/>
    <property type="match status" value="1"/>
</dbReference>
<dbReference type="FunFam" id="1.10.510.10:FF:000968">
    <property type="entry name" value="Casein kinase I, putative"/>
    <property type="match status" value="1"/>
</dbReference>
<dbReference type="FunFam" id="3.30.200.20:FF:000538">
    <property type="entry name" value="Putative Casein kinase I"/>
    <property type="match status" value="1"/>
</dbReference>
<dbReference type="Gene3D" id="3.30.200.20">
    <property type="entry name" value="Phosphorylase Kinase, domain 1"/>
    <property type="match status" value="1"/>
</dbReference>
<dbReference type="Gene3D" id="1.10.510.10">
    <property type="entry name" value="Transferase(Phosphotransferase) domain 1"/>
    <property type="match status" value="1"/>
</dbReference>
<dbReference type="InterPro" id="IPR050235">
    <property type="entry name" value="CK1_Ser-Thr_kinase"/>
</dbReference>
<dbReference type="InterPro" id="IPR011009">
    <property type="entry name" value="Kinase-like_dom_sf"/>
</dbReference>
<dbReference type="InterPro" id="IPR000719">
    <property type="entry name" value="Prot_kinase_dom"/>
</dbReference>
<dbReference type="InterPro" id="IPR017441">
    <property type="entry name" value="Protein_kinase_ATP_BS"/>
</dbReference>
<dbReference type="InterPro" id="IPR008271">
    <property type="entry name" value="Ser/Thr_kinase_AS"/>
</dbReference>
<dbReference type="PANTHER" id="PTHR11909">
    <property type="entry name" value="CASEIN KINASE-RELATED"/>
    <property type="match status" value="1"/>
</dbReference>
<dbReference type="Pfam" id="PF00069">
    <property type="entry name" value="Pkinase"/>
    <property type="match status" value="1"/>
</dbReference>
<dbReference type="SMART" id="SM00220">
    <property type="entry name" value="S_TKc"/>
    <property type="match status" value="1"/>
</dbReference>
<dbReference type="SUPFAM" id="SSF56112">
    <property type="entry name" value="Protein kinase-like (PK-like)"/>
    <property type="match status" value="1"/>
</dbReference>
<dbReference type="PROSITE" id="PS00107">
    <property type="entry name" value="PROTEIN_KINASE_ATP"/>
    <property type="match status" value="1"/>
</dbReference>
<dbReference type="PROSITE" id="PS50011">
    <property type="entry name" value="PROTEIN_KINASE_DOM"/>
    <property type="match status" value="1"/>
</dbReference>
<dbReference type="PROSITE" id="PS00108">
    <property type="entry name" value="PROTEIN_KINASE_ST"/>
    <property type="match status" value="1"/>
</dbReference>
<evidence type="ECO:0000255" key="1">
    <source>
        <dbReference type="PROSITE-ProRule" id="PRU00159"/>
    </source>
</evidence>
<evidence type="ECO:0000255" key="2">
    <source>
        <dbReference type="PROSITE-ProRule" id="PRU10027"/>
    </source>
</evidence>
<evidence type="ECO:0000256" key="3">
    <source>
        <dbReference type="SAM" id="MobiDB-lite"/>
    </source>
</evidence>
<evidence type="ECO:0000269" key="4">
    <source>
    </source>
</evidence>
<evidence type="ECO:0000269" key="5">
    <source>
    </source>
</evidence>
<evidence type="ECO:0000269" key="6">
    <source>
    </source>
</evidence>
<evidence type="ECO:0000269" key="7">
    <source>
    </source>
</evidence>
<evidence type="ECO:0000305" key="8"/>
<evidence type="ECO:0007744" key="9">
    <source>
    </source>
</evidence>
<evidence type="ECO:0007744" key="10">
    <source>
    </source>
</evidence>
<evidence type="ECO:0007744" key="11">
    <source>
    </source>
</evidence>
<evidence type="ECO:0007744" key="12">
    <source>
    </source>
</evidence>
<protein>
    <recommendedName>
        <fullName>Casein kinase I homolog 2</fullName>
        <ecNumber>2.7.11.1</ecNumber>
    </recommendedName>
</protein>
<organism>
    <name type="scientific">Saccharomyces cerevisiae (strain ATCC 204508 / S288c)</name>
    <name type="common">Baker's yeast</name>
    <dbReference type="NCBI Taxonomy" id="559292"/>
    <lineage>
        <taxon>Eukaryota</taxon>
        <taxon>Fungi</taxon>
        <taxon>Dikarya</taxon>
        <taxon>Ascomycota</taxon>
        <taxon>Saccharomycotina</taxon>
        <taxon>Saccharomycetes</taxon>
        <taxon>Saccharomycetales</taxon>
        <taxon>Saccharomycetaceae</taxon>
        <taxon>Saccharomyces</taxon>
    </lineage>
</organism>
<proteinExistence type="evidence at protein level"/>
<name>KC12_YEAST</name>
<comment type="function">
    <text evidence="4">Casein kinases are operationally defined by their preferential utilization of acidic proteins such as caseins as substrates.</text>
</comment>
<comment type="catalytic activity">
    <reaction>
        <text>L-seryl-[protein] + ATP = O-phospho-L-seryl-[protein] + ADP + H(+)</text>
        <dbReference type="Rhea" id="RHEA:17989"/>
        <dbReference type="Rhea" id="RHEA-COMP:9863"/>
        <dbReference type="Rhea" id="RHEA-COMP:11604"/>
        <dbReference type="ChEBI" id="CHEBI:15378"/>
        <dbReference type="ChEBI" id="CHEBI:29999"/>
        <dbReference type="ChEBI" id="CHEBI:30616"/>
        <dbReference type="ChEBI" id="CHEBI:83421"/>
        <dbReference type="ChEBI" id="CHEBI:456216"/>
        <dbReference type="EC" id="2.7.11.1"/>
    </reaction>
</comment>
<comment type="catalytic activity">
    <reaction>
        <text>L-threonyl-[protein] + ATP = O-phospho-L-threonyl-[protein] + ADP + H(+)</text>
        <dbReference type="Rhea" id="RHEA:46608"/>
        <dbReference type="Rhea" id="RHEA-COMP:11060"/>
        <dbReference type="Rhea" id="RHEA-COMP:11605"/>
        <dbReference type="ChEBI" id="CHEBI:15378"/>
        <dbReference type="ChEBI" id="CHEBI:30013"/>
        <dbReference type="ChEBI" id="CHEBI:30616"/>
        <dbReference type="ChEBI" id="CHEBI:61977"/>
        <dbReference type="ChEBI" id="CHEBI:456216"/>
        <dbReference type="EC" id="2.7.11.1"/>
    </reaction>
</comment>
<comment type="interaction">
    <interactant intactId="EBI-4729">
        <id>P23292</id>
    </interactant>
    <interactant intactId="EBI-4718">
        <id>P23291</id>
        <label>YCK1</label>
    </interactant>
    <organismsDiffer>false</organismsDiffer>
    <experiments>4</experiments>
</comment>
<comment type="subcellular location">
    <subcellularLocation>
        <location evidence="4">Cell membrane</location>
        <topology evidence="4">Lipid-anchor</topology>
    </subcellularLocation>
</comment>
<comment type="PTM">
    <text evidence="5 7">Palmitoylated by AKR1, which is required for proper plasma membrane localization of YCK2.</text>
</comment>
<comment type="miscellaneous">
    <text evidence="6">Present with 6160 molecules/cell in log phase SD medium.</text>
</comment>
<comment type="similarity">
    <text evidence="8">Belongs to the protein kinase superfamily. CK1 Ser/Thr protein kinase family. Casein kinase I subfamily.</text>
</comment>
<feature type="initiator methionine" description="Removed" evidence="12">
    <location>
        <position position="1"/>
    </location>
</feature>
<feature type="chain" id="PRO_0000192857" description="Casein kinase I homolog 2">
    <location>
        <begin position="2"/>
        <end position="546"/>
    </location>
</feature>
<feature type="domain" description="Protein kinase" evidence="1">
    <location>
        <begin position="76"/>
        <end position="360"/>
    </location>
</feature>
<feature type="region of interest" description="Disordered" evidence="3">
    <location>
        <begin position="1"/>
        <end position="67"/>
    </location>
</feature>
<feature type="region of interest" description="Disordered" evidence="3">
    <location>
        <begin position="373"/>
        <end position="425"/>
    </location>
</feature>
<feature type="region of interest" description="Disordered" evidence="3">
    <location>
        <begin position="443"/>
        <end position="546"/>
    </location>
</feature>
<feature type="compositionally biased region" description="Polar residues" evidence="3">
    <location>
        <begin position="1"/>
        <end position="33"/>
    </location>
</feature>
<feature type="compositionally biased region" description="Polar residues" evidence="3">
    <location>
        <begin position="44"/>
        <end position="55"/>
    </location>
</feature>
<feature type="compositionally biased region" description="Low complexity" evidence="3">
    <location>
        <begin position="412"/>
        <end position="425"/>
    </location>
</feature>
<feature type="compositionally biased region" description="Basic and acidic residues" evidence="3">
    <location>
        <begin position="453"/>
        <end position="465"/>
    </location>
</feature>
<feature type="compositionally biased region" description="Low complexity" evidence="3">
    <location>
        <begin position="475"/>
        <end position="496"/>
    </location>
</feature>
<feature type="compositionally biased region" description="Polar residues" evidence="3">
    <location>
        <begin position="497"/>
        <end position="530"/>
    </location>
</feature>
<feature type="compositionally biased region" description="Low complexity" evidence="3">
    <location>
        <begin position="533"/>
        <end position="546"/>
    </location>
</feature>
<feature type="active site" description="Proton acceptor" evidence="1 2">
    <location>
        <position position="195"/>
    </location>
</feature>
<feature type="binding site" evidence="1">
    <location>
        <begin position="82"/>
        <end position="90"/>
    </location>
    <ligand>
        <name>ATP</name>
        <dbReference type="ChEBI" id="CHEBI:30616"/>
    </ligand>
</feature>
<feature type="binding site" evidence="1">
    <location>
        <position position="105"/>
    </location>
    <ligand>
        <name>ATP</name>
        <dbReference type="ChEBI" id="CHEBI:30616"/>
    </ligand>
</feature>
<feature type="modified residue" description="N-acetylserine" evidence="12">
    <location>
        <position position="2"/>
    </location>
</feature>
<feature type="modified residue" description="Phosphoserine" evidence="9 10">
    <location>
        <position position="455"/>
    </location>
</feature>
<feature type="lipid moiety-binding region" description="S-palmitoyl cysteine" evidence="5 7">
    <location>
        <position position="545"/>
    </location>
</feature>
<feature type="lipid moiety-binding region" description="S-palmitoyl cysteine" evidence="5 7">
    <location>
        <position position="546"/>
    </location>
</feature>
<feature type="cross-link" description="Glycyl lysine isopeptide (Lys-Gly) (interchain with G-Cter in ubiquitin)" evidence="11">
    <location>
        <position position="465"/>
    </location>
</feature>
<feature type="mutagenesis site" description="Impaired palmitoylation and plasma membrane localization." evidence="7">
    <original>C</original>
    <variation>S</variation>
    <location>
        <position position="545"/>
    </location>
</feature>
<feature type="mutagenesis site" description="Impaired palmitoylation and plasma membrane localization." evidence="7">
    <original>C</original>
    <variation>S</variation>
    <location>
        <position position="546"/>
    </location>
</feature>
<sequence>MSQVQSPLTATNSGLAVNNNTMNSQMPNRSNVRLVNGTLPPSLHVSSNLNHNTGNSSASYSGSQSRDDSTIVGLHYKIGKKIGEGSFGVLFEGTNMINGLPVAIKFEPRKTEAPQLKDEYRTYKILAGTPGIPQEYYFGQEGLHNILVIDLLGPSLEDLFDWCGRRFSVKTVVQVAVQMITLIEDLHAHDLIYRDIKPDNFLIGRPGQPDANKVHLIDFGMAKQYRDPKTKQHIPYREKKSLSGTARYMSINTHLGREQSRRDDMEAMGHVFFYFLRGQLPWQGLKAPNNKQKYEKIGEKKRLTNVYDLAQGLPIQFGRYLEIVRNLSFEETPDYEGYRMLLLSVLDDLGETADGQYDWMKLNGGRGWDLSINKKPNLHGYGHPNPPNEKSKRHRSKNHQYSSPDHHHHYNQQQQQQQAQAQAQAQAQAKVQQQQLQQAQAQQQANRYQLQPDDSHYDEEREASKLDPTSYEAYQQQTQQKYAQQQQKQMQQKSKQFANTGANGQTNKYPYNAQPTANDEQNAKNAAQDRNSNKSSKGFFSKLGCC</sequence>
<accession>P23292</accession>
<accession>D6W129</accession>